<sequence length="153" mass="17876">MGEKLICNNKKAFHDFFIEERFEAGMVLKGTEVKSLRDGKANLNDSFALIRNGEIFLHNLHINPYAFGNRENHDPDRLRKLLMHKKEIEKLFGKIREKGYSVVPLRLYFKNGLAKVELGLAKGKKLYDKREDMKKKDQSREMAQALREKSKSH</sequence>
<name>SSRP_GEOSL</name>
<dbReference type="EMBL" id="AE017180">
    <property type="protein sequence ID" value="AAR35087.1"/>
    <property type="molecule type" value="Genomic_DNA"/>
</dbReference>
<dbReference type="RefSeq" id="NP_952760.1">
    <property type="nucleotide sequence ID" value="NC_002939.5"/>
</dbReference>
<dbReference type="RefSeq" id="WP_010942353.1">
    <property type="nucleotide sequence ID" value="NC_002939.5"/>
</dbReference>
<dbReference type="SMR" id="Q74CG4"/>
<dbReference type="FunCoup" id="Q74CG4">
    <property type="interactions" value="483"/>
</dbReference>
<dbReference type="STRING" id="243231.GSU1709"/>
<dbReference type="EnsemblBacteria" id="AAR35087">
    <property type="protein sequence ID" value="AAR35087"/>
    <property type="gene ID" value="GSU1709"/>
</dbReference>
<dbReference type="KEGG" id="gsu:GSU1709"/>
<dbReference type="PATRIC" id="fig|243231.5.peg.1754"/>
<dbReference type="eggNOG" id="COG0691">
    <property type="taxonomic scope" value="Bacteria"/>
</dbReference>
<dbReference type="HOGENOM" id="CLU_108953_0_1_7"/>
<dbReference type="InParanoid" id="Q74CG4"/>
<dbReference type="OrthoDB" id="9805462at2"/>
<dbReference type="Proteomes" id="UP000000577">
    <property type="component" value="Chromosome"/>
</dbReference>
<dbReference type="GO" id="GO:0005829">
    <property type="term" value="C:cytosol"/>
    <property type="evidence" value="ECO:0000318"/>
    <property type="project" value="GO_Central"/>
</dbReference>
<dbReference type="GO" id="GO:0003723">
    <property type="term" value="F:RNA binding"/>
    <property type="evidence" value="ECO:0000318"/>
    <property type="project" value="GO_Central"/>
</dbReference>
<dbReference type="GO" id="GO:0070929">
    <property type="term" value="P:trans-translation"/>
    <property type="evidence" value="ECO:0007669"/>
    <property type="project" value="UniProtKB-UniRule"/>
</dbReference>
<dbReference type="CDD" id="cd09294">
    <property type="entry name" value="SmpB"/>
    <property type="match status" value="1"/>
</dbReference>
<dbReference type="Gene3D" id="2.40.280.10">
    <property type="match status" value="1"/>
</dbReference>
<dbReference type="HAMAP" id="MF_00023">
    <property type="entry name" value="SmpB"/>
    <property type="match status" value="1"/>
</dbReference>
<dbReference type="InterPro" id="IPR023620">
    <property type="entry name" value="SmpB"/>
</dbReference>
<dbReference type="InterPro" id="IPR000037">
    <property type="entry name" value="SsrA-bd_prot"/>
</dbReference>
<dbReference type="InterPro" id="IPR020081">
    <property type="entry name" value="SsrA-bd_prot_CS"/>
</dbReference>
<dbReference type="NCBIfam" id="NF003843">
    <property type="entry name" value="PRK05422.1"/>
    <property type="match status" value="1"/>
</dbReference>
<dbReference type="NCBIfam" id="TIGR00086">
    <property type="entry name" value="smpB"/>
    <property type="match status" value="1"/>
</dbReference>
<dbReference type="PANTHER" id="PTHR30308:SF2">
    <property type="entry name" value="SSRA-BINDING PROTEIN"/>
    <property type="match status" value="1"/>
</dbReference>
<dbReference type="PANTHER" id="PTHR30308">
    <property type="entry name" value="TMRNA-BINDING COMPONENT OF TRANS-TRANSLATION TAGGING COMPLEX"/>
    <property type="match status" value="1"/>
</dbReference>
<dbReference type="Pfam" id="PF01668">
    <property type="entry name" value="SmpB"/>
    <property type="match status" value="1"/>
</dbReference>
<dbReference type="SUPFAM" id="SSF74982">
    <property type="entry name" value="Small protein B (SmpB)"/>
    <property type="match status" value="1"/>
</dbReference>
<dbReference type="PROSITE" id="PS01317">
    <property type="entry name" value="SSRP"/>
    <property type="match status" value="1"/>
</dbReference>
<proteinExistence type="inferred from homology"/>
<organism>
    <name type="scientific">Geobacter sulfurreducens (strain ATCC 51573 / DSM 12127 / PCA)</name>
    <dbReference type="NCBI Taxonomy" id="243231"/>
    <lineage>
        <taxon>Bacteria</taxon>
        <taxon>Pseudomonadati</taxon>
        <taxon>Thermodesulfobacteriota</taxon>
        <taxon>Desulfuromonadia</taxon>
        <taxon>Geobacterales</taxon>
        <taxon>Geobacteraceae</taxon>
        <taxon>Geobacter</taxon>
    </lineage>
</organism>
<reference key="1">
    <citation type="journal article" date="2003" name="Science">
        <title>Genome of Geobacter sulfurreducens: metal reduction in subsurface environments.</title>
        <authorList>
            <person name="Methe B.A."/>
            <person name="Nelson K.E."/>
            <person name="Eisen J.A."/>
            <person name="Paulsen I.T."/>
            <person name="Nelson W.C."/>
            <person name="Heidelberg J.F."/>
            <person name="Wu D."/>
            <person name="Wu M."/>
            <person name="Ward N.L."/>
            <person name="Beanan M.J."/>
            <person name="Dodson R.J."/>
            <person name="Madupu R."/>
            <person name="Brinkac L.M."/>
            <person name="Daugherty S.C."/>
            <person name="DeBoy R.T."/>
            <person name="Durkin A.S."/>
            <person name="Gwinn M.L."/>
            <person name="Kolonay J.F."/>
            <person name="Sullivan S.A."/>
            <person name="Haft D.H."/>
            <person name="Selengut J."/>
            <person name="Davidsen T.M."/>
            <person name="Zafar N."/>
            <person name="White O."/>
            <person name="Tran B."/>
            <person name="Romero C."/>
            <person name="Forberger H.A."/>
            <person name="Weidman J.F."/>
            <person name="Khouri H.M."/>
            <person name="Feldblyum T.V."/>
            <person name="Utterback T.R."/>
            <person name="Van Aken S.E."/>
            <person name="Lovley D.R."/>
            <person name="Fraser C.M."/>
        </authorList>
    </citation>
    <scope>NUCLEOTIDE SEQUENCE [LARGE SCALE GENOMIC DNA]</scope>
    <source>
        <strain>ATCC 51573 / DSM 12127 / PCA</strain>
    </source>
</reference>
<comment type="function">
    <text evidence="1">Required for rescue of stalled ribosomes mediated by trans-translation. Binds to transfer-messenger RNA (tmRNA), required for stable association of tmRNA with ribosomes. tmRNA and SmpB together mimic tRNA shape, replacing the anticodon stem-loop with SmpB. tmRNA is encoded by the ssrA gene; the 2 termini fold to resemble tRNA(Ala) and it encodes a 'tag peptide', a short internal open reading frame. During trans-translation Ala-aminoacylated tmRNA acts like a tRNA, entering the A-site of stalled ribosomes, displacing the stalled mRNA. The ribosome then switches to translate the ORF on the tmRNA; the nascent peptide is terminated with the 'tag peptide' encoded by the tmRNA and targeted for degradation. The ribosome is freed to recommence translation, which seems to be the essential function of trans-translation.</text>
</comment>
<comment type="subcellular location">
    <subcellularLocation>
        <location evidence="1">Cytoplasm</location>
    </subcellularLocation>
    <text evidence="1">The tmRNA-SmpB complex associates with stalled 70S ribosomes.</text>
</comment>
<comment type="similarity">
    <text evidence="1">Belongs to the SmpB family.</text>
</comment>
<evidence type="ECO:0000255" key="1">
    <source>
        <dbReference type="HAMAP-Rule" id="MF_00023"/>
    </source>
</evidence>
<evidence type="ECO:0000256" key="2">
    <source>
        <dbReference type="SAM" id="MobiDB-lite"/>
    </source>
</evidence>
<accession>Q74CG4</accession>
<feature type="chain" id="PRO_0000102953" description="SsrA-binding protein">
    <location>
        <begin position="1"/>
        <end position="153"/>
    </location>
</feature>
<feature type="region of interest" description="Disordered" evidence="2">
    <location>
        <begin position="129"/>
        <end position="153"/>
    </location>
</feature>
<gene>
    <name evidence="1" type="primary">smpB</name>
    <name type="ordered locus">GSU1709</name>
</gene>
<protein>
    <recommendedName>
        <fullName evidence="1">SsrA-binding protein</fullName>
    </recommendedName>
    <alternativeName>
        <fullName evidence="1">Small protein B</fullName>
    </alternativeName>
</protein>
<keyword id="KW-0963">Cytoplasm</keyword>
<keyword id="KW-1185">Reference proteome</keyword>
<keyword id="KW-0694">RNA-binding</keyword>